<feature type="chain" id="PRO_0000290183" description="Type IV secretion system protein VirB6">
    <location>
        <begin position="1"/>
        <end position="347"/>
    </location>
</feature>
<feature type="transmembrane region" description="Helical" evidence="1">
    <location>
        <begin position="32"/>
        <end position="52"/>
    </location>
</feature>
<feature type="transmembrane region" description="Helical" evidence="1">
    <location>
        <begin position="61"/>
        <end position="81"/>
    </location>
</feature>
<feature type="transmembrane region" description="Helical" evidence="1">
    <location>
        <begin position="153"/>
        <end position="173"/>
    </location>
</feature>
<feature type="transmembrane region" description="Helical" evidence="1">
    <location>
        <begin position="177"/>
        <end position="197"/>
    </location>
</feature>
<feature type="transmembrane region" description="Helical" evidence="1">
    <location>
        <begin position="205"/>
        <end position="225"/>
    </location>
</feature>
<feature type="transmembrane region" description="Helical" evidence="1">
    <location>
        <begin position="245"/>
        <end position="265"/>
    </location>
</feature>
<feature type="transmembrane region" description="Helical" evidence="1">
    <location>
        <begin position="270"/>
        <end position="290"/>
    </location>
</feature>
<feature type="sequence conflict" description="In Ref. 1; AAD56616." evidence="2" ref="1">
    <original>MY</original>
    <variation>RN</variation>
    <location>
        <begin position="264"/>
        <end position="265"/>
    </location>
</feature>
<accession>Q9RPX9</accession>
<accession>G0KER2</accession>
<accession>Q8FXK5</accession>
<dbReference type="EMBL" id="AF141604">
    <property type="protein sequence ID" value="AAD56616.1"/>
    <property type="molecule type" value="Genomic_DNA"/>
</dbReference>
<dbReference type="EMBL" id="AE014292">
    <property type="protein sequence ID" value="AAN33276.1"/>
    <property type="molecule type" value="Genomic_DNA"/>
</dbReference>
<dbReference type="EMBL" id="CP002998">
    <property type="protein sequence ID" value="AEM19556.1"/>
    <property type="molecule type" value="Genomic_DNA"/>
</dbReference>
<dbReference type="RefSeq" id="WP_002969266.1">
    <property type="nucleotide sequence ID" value="NZ_KN046805.1"/>
</dbReference>
<dbReference type="SMR" id="Q9RPX9"/>
<dbReference type="IntAct" id="Q9RPX9">
    <property type="interactions" value="1"/>
</dbReference>
<dbReference type="MINT" id="Q9RPX9"/>
<dbReference type="KEGG" id="bms:BRA0064"/>
<dbReference type="KEGG" id="bsi:BS1330_II0064"/>
<dbReference type="PATRIC" id="fig|204722.21.peg.2306"/>
<dbReference type="HOGENOM" id="CLU_065797_0_0_5"/>
<dbReference type="PhylomeDB" id="Q9RPX9"/>
<dbReference type="PRO" id="PR:Q9RPX9"/>
<dbReference type="Proteomes" id="UP000007104">
    <property type="component" value="Chromosome II"/>
</dbReference>
<dbReference type="GO" id="GO:0005886">
    <property type="term" value="C:plasma membrane"/>
    <property type="evidence" value="ECO:0007669"/>
    <property type="project" value="UniProtKB-SubCell"/>
</dbReference>
<dbReference type="GO" id="GO:0030255">
    <property type="term" value="P:protein secretion by the type IV secretion system"/>
    <property type="evidence" value="ECO:0007669"/>
    <property type="project" value="InterPro"/>
</dbReference>
<dbReference type="InterPro" id="IPR007688">
    <property type="entry name" value="Conjugal_tfr_TrbL/VirB6"/>
</dbReference>
<dbReference type="Pfam" id="PF04610">
    <property type="entry name" value="TrbL"/>
    <property type="match status" value="1"/>
</dbReference>
<comment type="function">
    <text>The VirB system could be required for the establishment of the replication niche in the host.</text>
</comment>
<comment type="interaction">
    <interactant intactId="EBI-11178687">
        <id>Q9RPX9</id>
    </interactant>
    <interactant intactId="EBI-7022388">
        <id>Q9RPX5</id>
        <label>virB10</label>
    </interactant>
    <organismsDiffer>false</organismsDiffer>
    <experiments>3</experiments>
</comment>
<comment type="subcellular location">
    <subcellularLocation>
        <location evidence="2">Cell inner membrane</location>
        <topology evidence="2">Multi-pass membrane protein</topology>
    </subcellularLocation>
</comment>
<comment type="induction">
    <text>Specifically induced within macrophages by phagosome acidification. Induced at 37 degrees Celsius in minimal medium, suggesting that nutritional stress is a regulating signal.</text>
</comment>
<comment type="miscellaneous">
    <text>Transcription of the operon is maximal in early exponential phase.</text>
</comment>
<comment type="similarity">
    <text evidence="2">Belongs to the TrbL/VirB6 family.</text>
</comment>
<organism>
    <name type="scientific">Brucella suis biovar 1 (strain 1330)</name>
    <dbReference type="NCBI Taxonomy" id="204722"/>
    <lineage>
        <taxon>Bacteria</taxon>
        <taxon>Pseudomonadati</taxon>
        <taxon>Pseudomonadota</taxon>
        <taxon>Alphaproteobacteria</taxon>
        <taxon>Hyphomicrobiales</taxon>
        <taxon>Brucellaceae</taxon>
        <taxon>Brucella/Ochrobactrum group</taxon>
        <taxon>Brucella</taxon>
    </lineage>
</organism>
<reference key="1">
    <citation type="journal article" date="1999" name="Mol. Microbiol.">
        <title>A homologue of the Agrobacterium tumefaciens VirB and Bordetella pertussis Ptl type IV secretion systems is essential for intracellular survival of Brucella suis.</title>
        <authorList>
            <person name="O'Callaghan D."/>
            <person name="Cazevieille C."/>
            <person name="Allardet-Servent A."/>
            <person name="Boschiroli M.L."/>
            <person name="Bourg G."/>
            <person name="Foulongne V."/>
            <person name="Frutos P."/>
            <person name="Kulakov Y."/>
            <person name="Ramuz M."/>
        </authorList>
    </citation>
    <scope>NUCLEOTIDE SEQUENCE [GENOMIC DNA]</scope>
    <source>
        <strain>1330</strain>
    </source>
</reference>
<reference key="2">
    <citation type="journal article" date="2002" name="Proc. Natl. Acad. Sci. U.S.A.">
        <title>The Brucella suis virB operon is induced intracellularly in macrophages.</title>
        <authorList>
            <person name="Boschiroli M.L."/>
            <person name="Ouahrani-Bettache S."/>
            <person name="Foulongne V."/>
            <person name="Michaux-Charachon S."/>
            <person name="Bourg G."/>
            <person name="Allardet-Servent A."/>
            <person name="Cazevieille C."/>
            <person name="Liautard J.P."/>
            <person name="Ramuz M."/>
            <person name="O'Callaghan D."/>
        </authorList>
    </citation>
    <scope>NUCLEOTIDE SEQUENCE [GENOMIC DNA]</scope>
    <scope>EXPRESSION CONDITIONS</scope>
    <source>
        <strain>1330</strain>
    </source>
</reference>
<reference key="3">
    <citation type="journal article" date="2002" name="Proc. Natl. Acad. Sci. U.S.A.">
        <title>The Brucella suis genome reveals fundamental similarities between animal and plant pathogens and symbionts.</title>
        <authorList>
            <person name="Paulsen I.T."/>
            <person name="Seshadri R."/>
            <person name="Nelson K.E."/>
            <person name="Eisen J.A."/>
            <person name="Heidelberg J.F."/>
            <person name="Read T.D."/>
            <person name="Dodson R.J."/>
            <person name="Umayam L.A."/>
            <person name="Brinkac L.M."/>
            <person name="Beanan M.J."/>
            <person name="Daugherty S.C."/>
            <person name="DeBoy R.T."/>
            <person name="Durkin A.S."/>
            <person name="Kolonay J.F."/>
            <person name="Madupu R."/>
            <person name="Nelson W.C."/>
            <person name="Ayodeji B."/>
            <person name="Kraul M."/>
            <person name="Shetty J."/>
            <person name="Malek J.A."/>
            <person name="Van Aken S.E."/>
            <person name="Riedmuller S."/>
            <person name="Tettelin H."/>
            <person name="Gill S.R."/>
            <person name="White O."/>
            <person name="Salzberg S.L."/>
            <person name="Hoover D.L."/>
            <person name="Lindler L.E."/>
            <person name="Halling S.M."/>
            <person name="Boyle S.M."/>
            <person name="Fraser C.M."/>
        </authorList>
    </citation>
    <scope>NUCLEOTIDE SEQUENCE [LARGE SCALE GENOMIC DNA]</scope>
    <source>
        <strain>1330</strain>
    </source>
</reference>
<reference key="4">
    <citation type="journal article" date="2011" name="J. Bacteriol.">
        <title>Revised genome sequence of Brucella suis 1330.</title>
        <authorList>
            <person name="Tae H."/>
            <person name="Shallom S."/>
            <person name="Settlage R."/>
            <person name="Preston D."/>
            <person name="Adams L.G."/>
            <person name="Garner H.R."/>
        </authorList>
    </citation>
    <scope>NUCLEOTIDE SEQUENCE [LARGE SCALE GENOMIC DNA]</scope>
    <source>
        <strain>1330</strain>
    </source>
</reference>
<gene>
    <name type="primary">virB6</name>
    <name type="ordered locus">BRA0064</name>
    <name type="ordered locus">BS1330_II0064</name>
</gene>
<sequence length="347" mass="36134">MVNPVIFEFIGTSIHNQLNNYVTMVASNTMNMIATTAVLAGGLYYTAMGILMSVGRIEGPFSQLVISCIKFMLIAAFALNISTYSEWVIDTVHNMESGFADAFAGNHGTPSSTIYQTLDNSLGKGWNIAAMLFEKGDNRGLTQIVQGFSELLLSFLVAGSTLILAGPTGAMIVATNAVIAILLGIGPLFILALGWAPTRGFFDRWFGAIVTSILQVALLSAVLSISSAIFSRMVAAINLASATQSTLFSCLSLTAVTIVMPYMMYKVYEYGGILGSSISAATISLGSLAVNTATSGGGAMTSIFSGSSGGGGSGSAKAGGESSYSAGGNAMWSPAYRQHVLGQFNRD</sequence>
<keyword id="KW-0997">Cell inner membrane</keyword>
<keyword id="KW-1003">Cell membrane</keyword>
<keyword id="KW-0472">Membrane</keyword>
<keyword id="KW-0812">Transmembrane</keyword>
<keyword id="KW-1133">Transmembrane helix</keyword>
<keyword id="KW-0843">Virulence</keyword>
<protein>
    <recommendedName>
        <fullName>Type IV secretion system protein VirB6</fullName>
    </recommendedName>
</protein>
<name>VIRB6_BRUSU</name>
<proteinExistence type="evidence at protein level"/>
<evidence type="ECO:0000255" key="1"/>
<evidence type="ECO:0000305" key="2"/>